<keyword id="KW-0004">4Fe-4S</keyword>
<keyword id="KW-0408">Iron</keyword>
<keyword id="KW-0411">Iron-sulfur</keyword>
<keyword id="KW-0479">Metal-binding</keyword>
<keyword id="KW-1185">Reference proteome</keyword>
<keyword id="KW-0949">S-adenosyl-L-methionine</keyword>
<evidence type="ECO:0000255" key="1">
    <source>
        <dbReference type="HAMAP-Rule" id="MF_01251"/>
    </source>
</evidence>
<evidence type="ECO:0000255" key="2">
    <source>
        <dbReference type="PROSITE-ProRule" id="PRU01266"/>
    </source>
</evidence>
<evidence type="ECO:0000256" key="3">
    <source>
        <dbReference type="SAM" id="MobiDB-lite"/>
    </source>
</evidence>
<name>Y1711_VIBCH</name>
<sequence length="789" mass="88214">MHSEVTPIHHYKKYWAECFGTAPFLPTSREEMDQLGWDSCDVIIVTGDAYVDHPSFGMAIIGRLLEAQGFRVGIIAQPEWQTKDAFMTLGKPNLFFGVTAGNMDSMINRYTADKKIRHDDAYTPNNKGGMRPDRCSLVYSQRCREAYKDVPIVLGGIEASLRRVAHYDYWSDKVRRSILLDAKADILLFGNAERALVEVAHRLANGESINKMVDIRGTAVNLAQVPEHFKIIDSTRIDQPNKPFVPSNPYEVETQCATKGDEKEEAQPITIRPSRHDAKTTAVRLPSFEKLVNDRILYAHASRVLHLETNPYSGRALVQRHGDRELWVNQAPIPLTTEEMDFVFGLYYARVPHPKYGDAKIPAYDMIKTSVNIMRGCFGGCSFCSITEHEGRIIQNRSQESIINELKEIRDKVPGFTGVISDLGGPTANMYRLGCSDPKAEANCRRPSCVFPGICHKLNTDHKHTIDLYRAARDVDGIKKVVIASGVRYDLAIESPEYVRELVTHHVGGYLKIAPEHTEKGPLSMMMKPGMGTYDRFKELFEKYSAEAGKKQYLIPYFIAAHPGTEDEDMVNLALWLKSNNYRCDQVQNFYPSPMCNATAMYHAEVNPLKRVKYKKPEKVPVAKGEAQRRLHKALLRYHDPANWPMIREALIAMGKRHLIGDRPECLIPEKDSDLVTPAQSRKSGRHGANRFATKHTHSQPGFDALRGNKSGGQGRPNSGNKSNQGKPAGSKPTGSKPTANKPAGNQSARSEQNRGQQGQRGSATGGKPQGSGRPASRGNTQRQPQRAR</sequence>
<comment type="cofactor">
    <cofactor evidence="1">
        <name>[4Fe-4S] cluster</name>
        <dbReference type="ChEBI" id="CHEBI:49883"/>
    </cofactor>
    <text evidence="1">Binds 1 [4Fe-4S] cluster. The cluster is coordinated with 3 cysteines and an exchangeable S-adenosyl-L-methionine.</text>
</comment>
<comment type="similarity">
    <text evidence="1">Belongs to the UPF0313 family.</text>
</comment>
<organism>
    <name type="scientific">Vibrio cholerae serotype O1 (strain ATCC 39315 / El Tor Inaba N16961)</name>
    <dbReference type="NCBI Taxonomy" id="243277"/>
    <lineage>
        <taxon>Bacteria</taxon>
        <taxon>Pseudomonadati</taxon>
        <taxon>Pseudomonadota</taxon>
        <taxon>Gammaproteobacteria</taxon>
        <taxon>Vibrionales</taxon>
        <taxon>Vibrionaceae</taxon>
        <taxon>Vibrio</taxon>
    </lineage>
</organism>
<reference key="1">
    <citation type="journal article" date="2000" name="Nature">
        <title>DNA sequence of both chromosomes of the cholera pathogen Vibrio cholerae.</title>
        <authorList>
            <person name="Heidelberg J.F."/>
            <person name="Eisen J.A."/>
            <person name="Nelson W.C."/>
            <person name="Clayton R.A."/>
            <person name="Gwinn M.L."/>
            <person name="Dodson R.J."/>
            <person name="Haft D.H."/>
            <person name="Hickey E.K."/>
            <person name="Peterson J.D."/>
            <person name="Umayam L.A."/>
            <person name="Gill S.R."/>
            <person name="Nelson K.E."/>
            <person name="Read T.D."/>
            <person name="Tettelin H."/>
            <person name="Richardson D.L."/>
            <person name="Ermolaeva M.D."/>
            <person name="Vamathevan J.J."/>
            <person name="Bass S."/>
            <person name="Qin H."/>
            <person name="Dragoi I."/>
            <person name="Sellers P."/>
            <person name="McDonald L.A."/>
            <person name="Utterback T.R."/>
            <person name="Fleischmann R.D."/>
            <person name="Nierman W.C."/>
            <person name="White O."/>
            <person name="Salzberg S.L."/>
            <person name="Smith H.O."/>
            <person name="Colwell R.R."/>
            <person name="Mekalanos J.J."/>
            <person name="Venter J.C."/>
            <person name="Fraser C.M."/>
        </authorList>
    </citation>
    <scope>NUCLEOTIDE SEQUENCE [LARGE SCALE GENOMIC DNA]</scope>
    <source>
        <strain>ATCC 39315 / El Tor Inaba N16961</strain>
    </source>
</reference>
<proteinExistence type="inferred from homology"/>
<gene>
    <name type="ordered locus">VC_1711</name>
</gene>
<dbReference type="EMBL" id="AE003852">
    <property type="protein sequence ID" value="AAF94861.1"/>
    <property type="molecule type" value="Genomic_DNA"/>
</dbReference>
<dbReference type="PIR" id="A82166">
    <property type="entry name" value="A82166"/>
</dbReference>
<dbReference type="RefSeq" id="NP_231347.1">
    <property type="nucleotide sequence ID" value="NC_002505.1"/>
</dbReference>
<dbReference type="RefSeq" id="WP_000555510.1">
    <property type="nucleotide sequence ID" value="NZ_LT906614.1"/>
</dbReference>
<dbReference type="STRING" id="243277.VC_1711"/>
<dbReference type="DNASU" id="2613716"/>
<dbReference type="EnsemblBacteria" id="AAF94861">
    <property type="protein sequence ID" value="AAF94861"/>
    <property type="gene ID" value="VC_1711"/>
</dbReference>
<dbReference type="KEGG" id="vch:VC_1711"/>
<dbReference type="PATRIC" id="fig|243277.26.peg.1637"/>
<dbReference type="eggNOG" id="COG1032">
    <property type="taxonomic scope" value="Bacteria"/>
</dbReference>
<dbReference type="HOGENOM" id="CLU_018288_2_0_6"/>
<dbReference type="Proteomes" id="UP000000584">
    <property type="component" value="Chromosome 1"/>
</dbReference>
<dbReference type="GO" id="GO:0051539">
    <property type="term" value="F:4 iron, 4 sulfur cluster binding"/>
    <property type="evidence" value="ECO:0007669"/>
    <property type="project" value="UniProtKB-KW"/>
</dbReference>
<dbReference type="GO" id="GO:0003824">
    <property type="term" value="F:catalytic activity"/>
    <property type="evidence" value="ECO:0007669"/>
    <property type="project" value="InterPro"/>
</dbReference>
<dbReference type="GO" id="GO:0005506">
    <property type="term" value="F:iron ion binding"/>
    <property type="evidence" value="ECO:0007669"/>
    <property type="project" value="UniProtKB-UniRule"/>
</dbReference>
<dbReference type="Gene3D" id="3.80.30.20">
    <property type="entry name" value="tm_1862 like domain"/>
    <property type="match status" value="1"/>
</dbReference>
<dbReference type="HAMAP" id="MF_01251">
    <property type="entry name" value="UPF0313"/>
    <property type="match status" value="1"/>
</dbReference>
<dbReference type="InterPro" id="IPR006638">
    <property type="entry name" value="Elp3/MiaA/NifB-like_rSAM"/>
</dbReference>
<dbReference type="InterPro" id="IPR020612">
    <property type="entry name" value="Methylthiotransferase_CS"/>
</dbReference>
<dbReference type="InterPro" id="IPR007197">
    <property type="entry name" value="rSAM"/>
</dbReference>
<dbReference type="InterPro" id="IPR023404">
    <property type="entry name" value="rSAM_horseshoe"/>
</dbReference>
<dbReference type="InterPro" id="IPR022946">
    <property type="entry name" value="UPF0313"/>
</dbReference>
<dbReference type="InterPro" id="IPR024560">
    <property type="entry name" value="UPF0313_C"/>
</dbReference>
<dbReference type="InterPro" id="IPR013704">
    <property type="entry name" value="UPF0313_N"/>
</dbReference>
<dbReference type="NCBIfam" id="TIGR03904">
    <property type="entry name" value="SAM_YgiQ"/>
    <property type="match status" value="1"/>
</dbReference>
<dbReference type="PANTHER" id="PTHR32331">
    <property type="entry name" value="UPF0313 PROTEIN YGIQ"/>
    <property type="match status" value="1"/>
</dbReference>
<dbReference type="PANTHER" id="PTHR32331:SF0">
    <property type="entry name" value="UPF0313 PROTEIN YGIQ"/>
    <property type="match status" value="1"/>
</dbReference>
<dbReference type="Pfam" id="PF11842">
    <property type="entry name" value="DUF3362"/>
    <property type="match status" value="1"/>
</dbReference>
<dbReference type="Pfam" id="PF04055">
    <property type="entry name" value="Radical_SAM"/>
    <property type="match status" value="1"/>
</dbReference>
<dbReference type="Pfam" id="PF08497">
    <property type="entry name" value="Radical_SAM_N"/>
    <property type="match status" value="1"/>
</dbReference>
<dbReference type="SFLD" id="SFLDG01082">
    <property type="entry name" value="B12-binding_domain_containing"/>
    <property type="match status" value="1"/>
</dbReference>
<dbReference type="SFLD" id="SFLDS00029">
    <property type="entry name" value="Radical_SAM"/>
    <property type="match status" value="1"/>
</dbReference>
<dbReference type="SFLD" id="SFLDG01069">
    <property type="entry name" value="UPF0313"/>
    <property type="match status" value="1"/>
</dbReference>
<dbReference type="SMART" id="SM00729">
    <property type="entry name" value="Elp3"/>
    <property type="match status" value="1"/>
</dbReference>
<dbReference type="SUPFAM" id="SSF102114">
    <property type="entry name" value="Radical SAM enzymes"/>
    <property type="match status" value="1"/>
</dbReference>
<dbReference type="PROSITE" id="PS51918">
    <property type="entry name" value="RADICAL_SAM"/>
    <property type="match status" value="1"/>
</dbReference>
<feature type="chain" id="PRO_0000076398" description="UPF0313 protein VC_1711">
    <location>
        <begin position="1"/>
        <end position="789"/>
    </location>
</feature>
<feature type="domain" description="Radical SAM core" evidence="2">
    <location>
        <begin position="363"/>
        <end position="642"/>
    </location>
</feature>
<feature type="region of interest" description="Disordered" evidence="3">
    <location>
        <begin position="669"/>
        <end position="789"/>
    </location>
</feature>
<feature type="compositionally biased region" description="Basic residues" evidence="3">
    <location>
        <begin position="683"/>
        <end position="698"/>
    </location>
</feature>
<feature type="compositionally biased region" description="Polar residues" evidence="3">
    <location>
        <begin position="716"/>
        <end position="726"/>
    </location>
</feature>
<feature type="compositionally biased region" description="Polar residues" evidence="3">
    <location>
        <begin position="733"/>
        <end position="763"/>
    </location>
</feature>
<feature type="compositionally biased region" description="Polar residues" evidence="3">
    <location>
        <begin position="778"/>
        <end position="789"/>
    </location>
</feature>
<feature type="binding site" evidence="1">
    <location>
        <position position="377"/>
    </location>
    <ligand>
        <name>[4Fe-4S] cluster</name>
        <dbReference type="ChEBI" id="CHEBI:49883"/>
        <note>4Fe-4S-S-AdoMet</note>
    </ligand>
</feature>
<feature type="binding site" evidence="1">
    <location>
        <position position="381"/>
    </location>
    <ligand>
        <name>[4Fe-4S] cluster</name>
        <dbReference type="ChEBI" id="CHEBI:49883"/>
        <note>4Fe-4S-S-AdoMet</note>
    </ligand>
</feature>
<feature type="binding site" evidence="1">
    <location>
        <position position="384"/>
    </location>
    <ligand>
        <name>[4Fe-4S] cluster</name>
        <dbReference type="ChEBI" id="CHEBI:49883"/>
        <note>4Fe-4S-S-AdoMet</note>
    </ligand>
</feature>
<accession>Q9KRD1</accession>
<protein>
    <recommendedName>
        <fullName evidence="1">UPF0313 protein VC_1711</fullName>
    </recommendedName>
</protein>